<feature type="chain" id="PRO_1000203163" description="tRNA uridine 5-carboxymethylaminomethyl modification enzyme MnmG">
    <location>
        <begin position="1"/>
        <end position="624"/>
    </location>
</feature>
<feature type="binding site" evidence="1">
    <location>
        <begin position="11"/>
        <end position="16"/>
    </location>
    <ligand>
        <name>FAD</name>
        <dbReference type="ChEBI" id="CHEBI:57692"/>
    </ligand>
</feature>
<feature type="binding site" evidence="1">
    <location>
        <position position="123"/>
    </location>
    <ligand>
        <name>FAD</name>
        <dbReference type="ChEBI" id="CHEBI:57692"/>
    </ligand>
</feature>
<feature type="binding site" evidence="1">
    <location>
        <position position="178"/>
    </location>
    <ligand>
        <name>FAD</name>
        <dbReference type="ChEBI" id="CHEBI:57692"/>
    </ligand>
</feature>
<feature type="binding site" evidence="1">
    <location>
        <begin position="270"/>
        <end position="284"/>
    </location>
    <ligand>
        <name>NAD(+)</name>
        <dbReference type="ChEBI" id="CHEBI:57540"/>
    </ligand>
</feature>
<feature type="binding site" evidence="1">
    <location>
        <position position="367"/>
    </location>
    <ligand>
        <name>FAD</name>
        <dbReference type="ChEBI" id="CHEBI:57692"/>
    </ligand>
</feature>
<evidence type="ECO:0000255" key="1">
    <source>
        <dbReference type="HAMAP-Rule" id="MF_00129"/>
    </source>
</evidence>
<protein>
    <recommendedName>
        <fullName evidence="1">tRNA uridine 5-carboxymethylaminomethyl modification enzyme MnmG</fullName>
    </recommendedName>
    <alternativeName>
        <fullName evidence="1">Glucose-inhibited division protein A</fullName>
    </alternativeName>
</protein>
<organism>
    <name type="scientific">Macrococcus caseolyticus (strain JCSC5402)</name>
    <name type="common">Macrococcoides caseolyticum</name>
    <dbReference type="NCBI Taxonomy" id="458233"/>
    <lineage>
        <taxon>Bacteria</taxon>
        <taxon>Bacillati</taxon>
        <taxon>Bacillota</taxon>
        <taxon>Bacilli</taxon>
        <taxon>Bacillales</taxon>
        <taxon>Staphylococcaceae</taxon>
        <taxon>Macrococcoides</taxon>
    </lineage>
</organism>
<sequence>MEQKYDVIVVGAGHAGVEAGLASARKGAKTLMLTINLDSVAFMPCNPSVGGPAKGIVVREIDALGGQMAKTIDKTHIQMRMLNTGKGPAVRALRAQADKVLYQQEMKSVIEAQDNLDIMQGMVERLIIEDGKVLGVETVIGTTYLADAVVLTTGTFLRGEIILGNIKYSSGPNHQMPSIKLADHLREIGFDIVRFKTGTPPRVNSDSIDYSKTEIQPGDDLPRAFSYETTEFIMDQLPCWLTYTNGETHQVIDDNLHLSAMYSGMIKGTGPRYCPSIEDKFVRFNDKPRHQIFLEPEGRNTKEVYVQGLSTSLPEHVQLQMLKTIPGLEKADMMRAGYAIEYDAIVPTQLWPTLETKKIQGLYTAGQINGTSGYEEAAGQGLMAGINAAAKVLGHDELILGRHEAYIGVLIDDLVTKGTNEPYRLLTSRAEHRLLLRHDNADLRLTEIGYNAGLIDEFRYSRFNNKKAAISEEINRLSQIRIKPNEKTQSMIESRGGTPLKDGILAIDLLRRPEMDYASVVALIEEQGMIDESVQEQVEIQTKYEGYIQKSLQQVEKVKRMENKKIPENIDYDDIHSLATEAREKLKEVKPLSIAQASRISGVNPADISILLIYIEQGKIKRVN</sequence>
<keyword id="KW-0963">Cytoplasm</keyword>
<keyword id="KW-0274">FAD</keyword>
<keyword id="KW-0285">Flavoprotein</keyword>
<keyword id="KW-0520">NAD</keyword>
<keyword id="KW-1185">Reference proteome</keyword>
<keyword id="KW-0819">tRNA processing</keyword>
<gene>
    <name evidence="1" type="primary">mnmG</name>
    <name evidence="1" type="synonym">gidA</name>
    <name type="ordered locus">MCCL_1954</name>
</gene>
<accession>B9E8Z3</accession>
<reference key="1">
    <citation type="journal article" date="2009" name="J. Bacteriol.">
        <title>Complete genome sequence of Macrococcus caseolyticus strain JCSCS5402, reflecting the ancestral genome of the human-pathogenic staphylococci.</title>
        <authorList>
            <person name="Baba T."/>
            <person name="Kuwahara-Arai K."/>
            <person name="Uchiyama I."/>
            <person name="Takeuchi F."/>
            <person name="Ito T."/>
            <person name="Hiramatsu K."/>
        </authorList>
    </citation>
    <scope>NUCLEOTIDE SEQUENCE [LARGE SCALE GENOMIC DNA]</scope>
    <source>
        <strain>JCSC5402</strain>
    </source>
</reference>
<name>MNMG_MACCJ</name>
<comment type="function">
    <text evidence="1">NAD-binding protein involved in the addition of a carboxymethylaminomethyl (cmnm) group at the wobble position (U34) of certain tRNAs, forming tRNA-cmnm(5)s(2)U34.</text>
</comment>
<comment type="cofactor">
    <cofactor evidence="1">
        <name>FAD</name>
        <dbReference type="ChEBI" id="CHEBI:57692"/>
    </cofactor>
</comment>
<comment type="subunit">
    <text evidence="1">Homodimer. Heterotetramer of two MnmE and two MnmG subunits.</text>
</comment>
<comment type="subcellular location">
    <subcellularLocation>
        <location evidence="1">Cytoplasm</location>
    </subcellularLocation>
</comment>
<comment type="similarity">
    <text evidence="1">Belongs to the MnmG family.</text>
</comment>
<dbReference type="EMBL" id="AP009484">
    <property type="protein sequence ID" value="BAH18661.1"/>
    <property type="molecule type" value="Genomic_DNA"/>
</dbReference>
<dbReference type="RefSeq" id="WP_015912453.1">
    <property type="nucleotide sequence ID" value="NC_011999.1"/>
</dbReference>
<dbReference type="SMR" id="B9E8Z3"/>
<dbReference type="STRING" id="458233.MCCL_1954"/>
<dbReference type="GeneID" id="61130367"/>
<dbReference type="KEGG" id="mcl:MCCL_1954"/>
<dbReference type="eggNOG" id="COG0445">
    <property type="taxonomic scope" value="Bacteria"/>
</dbReference>
<dbReference type="HOGENOM" id="CLU_007831_2_2_9"/>
<dbReference type="OrthoDB" id="9815560at2"/>
<dbReference type="Proteomes" id="UP000001383">
    <property type="component" value="Chromosome"/>
</dbReference>
<dbReference type="GO" id="GO:0005829">
    <property type="term" value="C:cytosol"/>
    <property type="evidence" value="ECO:0007669"/>
    <property type="project" value="TreeGrafter"/>
</dbReference>
<dbReference type="GO" id="GO:0050660">
    <property type="term" value="F:flavin adenine dinucleotide binding"/>
    <property type="evidence" value="ECO:0007669"/>
    <property type="project" value="UniProtKB-UniRule"/>
</dbReference>
<dbReference type="GO" id="GO:0030488">
    <property type="term" value="P:tRNA methylation"/>
    <property type="evidence" value="ECO:0007669"/>
    <property type="project" value="TreeGrafter"/>
</dbReference>
<dbReference type="GO" id="GO:0002098">
    <property type="term" value="P:tRNA wobble uridine modification"/>
    <property type="evidence" value="ECO:0007669"/>
    <property type="project" value="InterPro"/>
</dbReference>
<dbReference type="FunFam" id="1.10.10.1800:FF:000001">
    <property type="entry name" value="tRNA uridine 5-carboxymethylaminomethyl modification enzyme MnmG"/>
    <property type="match status" value="1"/>
</dbReference>
<dbReference type="FunFam" id="1.10.150.570:FF:000001">
    <property type="entry name" value="tRNA uridine 5-carboxymethylaminomethyl modification enzyme MnmG"/>
    <property type="match status" value="1"/>
</dbReference>
<dbReference type="FunFam" id="3.50.50.60:FF:000002">
    <property type="entry name" value="tRNA uridine 5-carboxymethylaminomethyl modification enzyme MnmG"/>
    <property type="match status" value="1"/>
</dbReference>
<dbReference type="FunFam" id="3.50.50.60:FF:000063">
    <property type="entry name" value="tRNA uridine 5-carboxymethylaminomethyl modification enzyme MnmG"/>
    <property type="match status" value="1"/>
</dbReference>
<dbReference type="Gene3D" id="3.50.50.60">
    <property type="entry name" value="FAD/NAD(P)-binding domain"/>
    <property type="match status" value="2"/>
</dbReference>
<dbReference type="Gene3D" id="1.10.150.570">
    <property type="entry name" value="GidA associated domain, C-terminal subdomain"/>
    <property type="match status" value="1"/>
</dbReference>
<dbReference type="Gene3D" id="1.10.10.1800">
    <property type="entry name" value="tRNA uridine 5-carboxymethylaminomethyl modification enzyme MnmG/GidA"/>
    <property type="match status" value="1"/>
</dbReference>
<dbReference type="HAMAP" id="MF_00129">
    <property type="entry name" value="MnmG_GidA"/>
    <property type="match status" value="1"/>
</dbReference>
<dbReference type="InterPro" id="IPR036188">
    <property type="entry name" value="FAD/NAD-bd_sf"/>
</dbReference>
<dbReference type="InterPro" id="IPR049312">
    <property type="entry name" value="GIDA_C_N"/>
</dbReference>
<dbReference type="InterPro" id="IPR004416">
    <property type="entry name" value="MnmG"/>
</dbReference>
<dbReference type="InterPro" id="IPR002218">
    <property type="entry name" value="MnmG-rel"/>
</dbReference>
<dbReference type="InterPro" id="IPR020595">
    <property type="entry name" value="MnmG-rel_CS"/>
</dbReference>
<dbReference type="InterPro" id="IPR026904">
    <property type="entry name" value="MnmG_C"/>
</dbReference>
<dbReference type="InterPro" id="IPR047001">
    <property type="entry name" value="MnmG_C_subdom"/>
</dbReference>
<dbReference type="InterPro" id="IPR044920">
    <property type="entry name" value="MnmG_C_subdom_sf"/>
</dbReference>
<dbReference type="InterPro" id="IPR040131">
    <property type="entry name" value="MnmG_N"/>
</dbReference>
<dbReference type="NCBIfam" id="TIGR00136">
    <property type="entry name" value="mnmG_gidA"/>
    <property type="match status" value="1"/>
</dbReference>
<dbReference type="PANTHER" id="PTHR11806">
    <property type="entry name" value="GLUCOSE INHIBITED DIVISION PROTEIN A"/>
    <property type="match status" value="1"/>
</dbReference>
<dbReference type="PANTHER" id="PTHR11806:SF0">
    <property type="entry name" value="PROTEIN MTO1 HOMOLOG, MITOCHONDRIAL"/>
    <property type="match status" value="1"/>
</dbReference>
<dbReference type="Pfam" id="PF01134">
    <property type="entry name" value="GIDA"/>
    <property type="match status" value="1"/>
</dbReference>
<dbReference type="Pfam" id="PF21680">
    <property type="entry name" value="GIDA_C_1st"/>
    <property type="match status" value="1"/>
</dbReference>
<dbReference type="Pfam" id="PF13932">
    <property type="entry name" value="SAM_GIDA_C"/>
    <property type="match status" value="1"/>
</dbReference>
<dbReference type="SMART" id="SM01228">
    <property type="entry name" value="GIDA_assoc_3"/>
    <property type="match status" value="1"/>
</dbReference>
<dbReference type="SUPFAM" id="SSF51905">
    <property type="entry name" value="FAD/NAD(P)-binding domain"/>
    <property type="match status" value="1"/>
</dbReference>
<dbReference type="PROSITE" id="PS01280">
    <property type="entry name" value="GIDA_1"/>
    <property type="match status" value="1"/>
</dbReference>
<dbReference type="PROSITE" id="PS01281">
    <property type="entry name" value="GIDA_2"/>
    <property type="match status" value="1"/>
</dbReference>
<proteinExistence type="inferred from homology"/>